<reference key="1">
    <citation type="journal article" date="2006" name="Proc. Natl. Acad. Sci. U.S.A.">
        <title>Identification of genes subject to positive selection in uropathogenic strains of Escherichia coli: a comparative genomics approach.</title>
        <authorList>
            <person name="Chen S.L."/>
            <person name="Hung C.-S."/>
            <person name="Xu J."/>
            <person name="Reigstad C.S."/>
            <person name="Magrini V."/>
            <person name="Sabo A."/>
            <person name="Blasiar D."/>
            <person name="Bieri T."/>
            <person name="Meyer R.R."/>
            <person name="Ozersky P."/>
            <person name="Armstrong J.R."/>
            <person name="Fulton R.S."/>
            <person name="Latreille J.P."/>
            <person name="Spieth J."/>
            <person name="Hooton T.M."/>
            <person name="Mardis E.R."/>
            <person name="Hultgren S.J."/>
            <person name="Gordon J.I."/>
        </authorList>
    </citation>
    <scope>NUCLEOTIDE SEQUENCE [LARGE SCALE GENOMIC DNA]</scope>
    <source>
        <strain>UTI89 / UPEC</strain>
    </source>
</reference>
<feature type="chain" id="PRO_0000274120" description="Nickel import ATP-binding protein NikE">
    <location>
        <begin position="1"/>
        <end position="268"/>
    </location>
</feature>
<feature type="domain" description="ABC transporter" evidence="1">
    <location>
        <begin position="4"/>
        <end position="252"/>
    </location>
</feature>
<feature type="binding site" evidence="1">
    <location>
        <begin position="45"/>
        <end position="52"/>
    </location>
    <ligand>
        <name>ATP</name>
        <dbReference type="ChEBI" id="CHEBI:30616"/>
    </ligand>
</feature>
<keyword id="KW-0067">ATP-binding</keyword>
<keyword id="KW-0997">Cell inner membrane</keyword>
<keyword id="KW-1003">Cell membrane</keyword>
<keyword id="KW-0406">Ion transport</keyword>
<keyword id="KW-0472">Membrane</keyword>
<keyword id="KW-0533">Nickel</keyword>
<keyword id="KW-0921">Nickel transport</keyword>
<keyword id="KW-0547">Nucleotide-binding</keyword>
<keyword id="KW-1278">Translocase</keyword>
<keyword id="KW-0813">Transport</keyword>
<organism>
    <name type="scientific">Escherichia coli (strain UTI89 / UPEC)</name>
    <dbReference type="NCBI Taxonomy" id="364106"/>
    <lineage>
        <taxon>Bacteria</taxon>
        <taxon>Pseudomonadati</taxon>
        <taxon>Pseudomonadota</taxon>
        <taxon>Gammaproteobacteria</taxon>
        <taxon>Enterobacterales</taxon>
        <taxon>Enterobacteriaceae</taxon>
        <taxon>Escherichia</taxon>
    </lineage>
</organism>
<sequence length="268" mass="29695">MTLLNVSDLSHHYAHGGFSGKHQHQAVLNNVSLALKSGETVALLGRSGCGKSTLARLLVGLESPSQGNISWRGEPLAKLNRAQRKAFRRDIQMVFQDSISAVNPRKTVREILREPMRHLLSLKKAEQLARASEMLKAVDLDDSVLDKRPPQLSGGQLQRVCLARALAVEPKLLILDEAVSNLDLVLQAGVIRLLKKLQQQFGTACLFITHDLRLVERFCQRVMVMDNGQIVETQVVGDKLTFSSDAGRVLQNAVLPAFPVRRRTTEKV</sequence>
<protein>
    <recommendedName>
        <fullName evidence="1">Nickel import ATP-binding protein NikE</fullName>
        <ecNumber evidence="1">7.2.2.11</ecNumber>
    </recommendedName>
</protein>
<dbReference type="EC" id="7.2.2.11" evidence="1"/>
<dbReference type="EMBL" id="CP000243">
    <property type="protein sequence ID" value="ABE09426.1"/>
    <property type="molecule type" value="Genomic_DNA"/>
</dbReference>
<dbReference type="RefSeq" id="WP_000173679.1">
    <property type="nucleotide sequence ID" value="NZ_CP064825.1"/>
</dbReference>
<dbReference type="SMR" id="Q1R5D8"/>
<dbReference type="KEGG" id="eci:UTI89_C3997"/>
<dbReference type="HOGENOM" id="CLU_000604_1_23_6"/>
<dbReference type="Proteomes" id="UP000001952">
    <property type="component" value="Chromosome"/>
</dbReference>
<dbReference type="GO" id="GO:0005886">
    <property type="term" value="C:plasma membrane"/>
    <property type="evidence" value="ECO:0007669"/>
    <property type="project" value="UniProtKB-SubCell"/>
</dbReference>
<dbReference type="GO" id="GO:0015413">
    <property type="term" value="F:ABC-type nickel transporter activity"/>
    <property type="evidence" value="ECO:0007669"/>
    <property type="project" value="UniProtKB-EC"/>
</dbReference>
<dbReference type="GO" id="GO:0005524">
    <property type="term" value="F:ATP binding"/>
    <property type="evidence" value="ECO:0007669"/>
    <property type="project" value="UniProtKB-KW"/>
</dbReference>
<dbReference type="GO" id="GO:0016887">
    <property type="term" value="F:ATP hydrolysis activity"/>
    <property type="evidence" value="ECO:0007669"/>
    <property type="project" value="InterPro"/>
</dbReference>
<dbReference type="GO" id="GO:0016151">
    <property type="term" value="F:nickel cation binding"/>
    <property type="evidence" value="ECO:0007669"/>
    <property type="project" value="InterPro"/>
</dbReference>
<dbReference type="CDD" id="cd03257">
    <property type="entry name" value="ABC_NikE_OppD_transporters"/>
    <property type="match status" value="1"/>
</dbReference>
<dbReference type="FunFam" id="3.40.50.300:FF:001020">
    <property type="entry name" value="Nickel import ATP-binding protein NikE"/>
    <property type="match status" value="1"/>
</dbReference>
<dbReference type="Gene3D" id="3.40.50.300">
    <property type="entry name" value="P-loop containing nucleotide triphosphate hydrolases"/>
    <property type="match status" value="1"/>
</dbReference>
<dbReference type="InterPro" id="IPR003593">
    <property type="entry name" value="AAA+_ATPase"/>
</dbReference>
<dbReference type="InterPro" id="IPR050319">
    <property type="entry name" value="ABC_transp_ATP-bind"/>
</dbReference>
<dbReference type="InterPro" id="IPR003439">
    <property type="entry name" value="ABC_transporter-like_ATP-bd"/>
</dbReference>
<dbReference type="InterPro" id="IPR017871">
    <property type="entry name" value="ABC_transporter-like_CS"/>
</dbReference>
<dbReference type="InterPro" id="IPR014137">
    <property type="entry name" value="Nickel_NikE"/>
</dbReference>
<dbReference type="InterPro" id="IPR027417">
    <property type="entry name" value="P-loop_NTPase"/>
</dbReference>
<dbReference type="NCBIfam" id="TIGR02769">
    <property type="entry name" value="nickel_nikE"/>
    <property type="match status" value="1"/>
</dbReference>
<dbReference type="NCBIfam" id="NF007739">
    <property type="entry name" value="PRK10419.1"/>
    <property type="match status" value="1"/>
</dbReference>
<dbReference type="PANTHER" id="PTHR43776:SF7">
    <property type="entry name" value="D,D-DIPEPTIDE TRANSPORT ATP-BINDING PROTEIN DDPF-RELATED"/>
    <property type="match status" value="1"/>
</dbReference>
<dbReference type="PANTHER" id="PTHR43776">
    <property type="entry name" value="TRANSPORT ATP-BINDING PROTEIN"/>
    <property type="match status" value="1"/>
</dbReference>
<dbReference type="Pfam" id="PF00005">
    <property type="entry name" value="ABC_tran"/>
    <property type="match status" value="1"/>
</dbReference>
<dbReference type="SMART" id="SM00382">
    <property type="entry name" value="AAA"/>
    <property type="match status" value="1"/>
</dbReference>
<dbReference type="SUPFAM" id="SSF52540">
    <property type="entry name" value="P-loop containing nucleoside triphosphate hydrolases"/>
    <property type="match status" value="1"/>
</dbReference>
<dbReference type="PROSITE" id="PS00211">
    <property type="entry name" value="ABC_TRANSPORTER_1"/>
    <property type="match status" value="1"/>
</dbReference>
<dbReference type="PROSITE" id="PS50893">
    <property type="entry name" value="ABC_TRANSPORTER_2"/>
    <property type="match status" value="1"/>
</dbReference>
<dbReference type="PROSITE" id="PS51248">
    <property type="entry name" value="NIKE"/>
    <property type="match status" value="1"/>
</dbReference>
<name>NIKE_ECOUT</name>
<gene>
    <name evidence="1" type="primary">nikE</name>
    <name type="ordered locus">UTI89_C3997</name>
</gene>
<proteinExistence type="inferred from homology"/>
<comment type="function">
    <text evidence="1">Part of the ABC transporter complex NikABCDE involved in nickel import. Responsible for energy coupling to the transport system.</text>
</comment>
<comment type="catalytic activity">
    <reaction evidence="1">
        <text>Ni(2+)(out) + ATP + H2O = Ni(2+)(in) + ADP + phosphate + H(+)</text>
        <dbReference type="Rhea" id="RHEA:15557"/>
        <dbReference type="ChEBI" id="CHEBI:15377"/>
        <dbReference type="ChEBI" id="CHEBI:15378"/>
        <dbReference type="ChEBI" id="CHEBI:30616"/>
        <dbReference type="ChEBI" id="CHEBI:43474"/>
        <dbReference type="ChEBI" id="CHEBI:49786"/>
        <dbReference type="ChEBI" id="CHEBI:456216"/>
        <dbReference type="EC" id="7.2.2.11"/>
    </reaction>
</comment>
<comment type="subunit">
    <text evidence="1">The complex is composed of two ATP-binding proteins (NikD and NikE), two transmembrane proteins (NikB and NikC) and a solute-binding protein (NikA).</text>
</comment>
<comment type="subcellular location">
    <subcellularLocation>
        <location evidence="1">Cell inner membrane</location>
        <topology evidence="1">Peripheral membrane protein</topology>
    </subcellularLocation>
</comment>
<comment type="similarity">
    <text evidence="1">Belongs to the ABC transporter superfamily. Nickel importer (TC 3.A.1.5.3) family.</text>
</comment>
<accession>Q1R5D8</accession>
<evidence type="ECO:0000255" key="1">
    <source>
        <dbReference type="HAMAP-Rule" id="MF_01712"/>
    </source>
</evidence>